<feature type="chain" id="PRO_0000054628" description="11-beta-hydroxysteroid dehydrogenase type 2">
    <location>
        <begin position="1"/>
        <end position="386"/>
    </location>
</feature>
<feature type="active site" description="Proton acceptor" evidence="3">
    <location>
        <position position="232"/>
    </location>
</feature>
<feature type="binding site" evidence="1">
    <location>
        <begin position="82"/>
        <end position="111"/>
    </location>
    <ligand>
        <name>NAD(+)</name>
        <dbReference type="ChEBI" id="CHEBI:57540"/>
    </ligand>
</feature>
<feature type="binding site" evidence="1">
    <location>
        <position position="219"/>
    </location>
    <ligand>
        <name>substrate</name>
    </ligand>
</feature>
<feature type="sequence conflict" description="In Ref. 1; AAC60711/CAA62218." evidence="11" ref="1">
    <original>Q</original>
    <variation>L</variation>
    <location>
        <position position="49"/>
    </location>
</feature>
<feature type="sequence conflict" description="In Ref. 1; AAC60711/CAA62218." evidence="11" ref="1">
    <original>L</original>
    <variation>M</variation>
    <location>
        <position position="52"/>
    </location>
</feature>
<feature type="sequence conflict" description="In Ref. 1; AAC60711/CAA62218." evidence="11" ref="1">
    <original>E</original>
    <variation>G</variation>
    <location>
        <position position="178"/>
    </location>
</feature>
<feature type="sequence conflict" description="In Ref. 1; AAC60711/CAA62218." evidence="11" ref="1">
    <original>T</original>
    <variation>P</variation>
    <location>
        <position position="216"/>
    </location>
</feature>
<feature type="sequence conflict" description="In Ref. 1; AAC60711/CAA62218." evidence="11" ref="1">
    <original>F</original>
    <variation>S</variation>
    <location>
        <position position="265"/>
    </location>
</feature>
<feature type="sequence conflict" description="In Ref. 1; AAC60711/CAA62218." evidence="11" ref="1">
    <original>D</original>
    <variation>A</variation>
    <location>
        <position position="268"/>
    </location>
</feature>
<feature type="sequence conflict" description="In Ref. 1; AAC60711/CAA62218." evidence="11" ref="1">
    <original>E</original>
    <variation>A</variation>
    <location>
        <position position="297"/>
    </location>
</feature>
<name>DHI2_MOUSE</name>
<sequence>MERWPWPSGGAWLLVAARALLQLLRSDLRLGRPLLAALALLAALDWLCQRLLPPPAALVVLAGAGWIALSRLARPPRLPVATRAVLITGCDTGFGKETAKKLDAMGFTVLATVLDLNSPGALELRDLCSPRLKLLQMDLTKAEDISRVLEITKAHTASTGLWGLVNNAGLNIVVADVELSPVATFRKCMEVNFFGALELTKGLLPLLRHSRGRIVTVGSPAGDMPYPCLAAYGTSKAAIALLMDTFGCELLPWGIKVSIIKPGCFKTDAVTNVNLWEKRKQLLLANIPRELLQAYGEDYIEHVHGQFLNSLRMALPDLSPVVDAIIDALLAAQPRSRYYPGRGLGLMYFIHHYLPEGLRRCFLQNFFINHLLPRALRPGQHGPAPA</sequence>
<protein>
    <recommendedName>
        <fullName>11-beta-hydroxysteroid dehydrogenase type 2</fullName>
        <shortName>11-DH2</shortName>
        <shortName>11-beta-HSD2</shortName>
        <ecNumber evidence="6 14">1.1.1.-</ecNumber>
    </recommendedName>
    <alternativeName>
        <fullName>Corticosteroid 11-beta-dehydrogenase isozyme 2</fullName>
    </alternativeName>
    <alternativeName>
        <fullName>NAD-dependent 11-beta-hydroxysteroid dehydrogenase</fullName>
    </alternativeName>
</protein>
<evidence type="ECO:0000250" key="1"/>
<evidence type="ECO:0000250" key="2">
    <source>
        <dbReference type="UniProtKB" id="P80365"/>
    </source>
</evidence>
<evidence type="ECO:0000255" key="3">
    <source>
        <dbReference type="PROSITE-ProRule" id="PRU10001"/>
    </source>
</evidence>
<evidence type="ECO:0000269" key="4">
    <source>
    </source>
</evidence>
<evidence type="ECO:0000269" key="5">
    <source>
    </source>
</evidence>
<evidence type="ECO:0000269" key="6">
    <source>
    </source>
</evidence>
<evidence type="ECO:0000269" key="7">
    <source>
    </source>
</evidence>
<evidence type="ECO:0000269" key="8">
    <source>
    </source>
</evidence>
<evidence type="ECO:0000303" key="9">
    <source>
    </source>
</evidence>
<evidence type="ECO:0000303" key="10">
    <source>
    </source>
</evidence>
<evidence type="ECO:0000305" key="11"/>
<evidence type="ECO:0000305" key="12">
    <source>
    </source>
</evidence>
<evidence type="ECO:0000305" key="13">
    <source>
    </source>
</evidence>
<evidence type="ECO:0000305" key="14">
    <source>
    </source>
</evidence>
<keyword id="KW-0256">Endoplasmic reticulum</keyword>
<keyword id="KW-0443">Lipid metabolism</keyword>
<keyword id="KW-0492">Microsome</keyword>
<keyword id="KW-0520">NAD</keyword>
<keyword id="KW-0560">Oxidoreductase</keyword>
<keyword id="KW-1185">Reference proteome</keyword>
<keyword id="KW-0753">Steroid metabolism</keyword>
<comment type="function">
    <text evidence="2 5 6 9 10 14">Catalyzes the conversion of biologically active 11beta-hydroxyglucocorticoids (11beta-hydroxysteroid) such as corticosterone, to inactive 11-ketoglucocorticoids (11-oxosteroid) such as 11-dehydrocorticosterone, in the presence of NAD(+) (Probable) (PubMed:22796344, PubMed:30902677). Functions as a dehydrogenase (oxidase), thereby decreasing the concentration of active glucocorticoids, thus protecting the nonselective mineralocorticoid receptor from occupation by glucocorticoids (PubMed:7664690). Plays an important role in maintaining glucocorticoids balance during preimplantation and protects the fetus from excessive maternal corticosterone exposure (PubMed:31600723). Catalyzes the oxidation of 11beta-hydroxytestosterone (11beta,17beta-dihydroxyandrost-4-ene-3-one) to 11-ketotestosterone (17beta-hydroxyandrost-4-ene-3,11-dione), a major bioactive androgen (PubMed:22796344). Catalyzes the conversion of 11beta-hydroxyandrostenedione (11beta-hydroxyandrost-4-ene-3,17-dione) to 11-ketoandrostenedione (androst-4-ene-3,11,17-trione), which can be further metabolized to 11-ketotestosterone (By similarity). Converts 7-beta-25-dihydroxycholesterol to 7-oxo-25-hydroxycholesterol in vitro (By similarity). 7-beta-25-dihydroxycholesterol (not 7-oxo-25-hydroxycholesterol) acts as a ligand for the G-protein-coupled receptor (GPCR) Epstein-Barr virus-induced gene 2 (EBI2) and may thereby regulate immune cell migration (By similarity).</text>
</comment>
<comment type="catalytic activity">
    <reaction evidence="5 6 14">
        <text>an 11beta-hydroxysteroid + NAD(+) = an 11-oxosteroid + NADH + H(+)</text>
        <dbReference type="Rhea" id="RHEA:53116"/>
        <dbReference type="ChEBI" id="CHEBI:15378"/>
        <dbReference type="ChEBI" id="CHEBI:35346"/>
        <dbReference type="ChEBI" id="CHEBI:47787"/>
        <dbReference type="ChEBI" id="CHEBI:57540"/>
        <dbReference type="ChEBI" id="CHEBI:57945"/>
    </reaction>
    <physiologicalReaction direction="left-to-right" evidence="12 13 14">
        <dbReference type="Rhea" id="RHEA:53117"/>
    </physiologicalReaction>
</comment>
<comment type="catalytic activity">
    <reaction evidence="5 6 14">
        <text>corticosterone + NAD(+) = 11-dehydrocorticosterone + NADH + H(+)</text>
        <dbReference type="Rhea" id="RHEA:42204"/>
        <dbReference type="ChEBI" id="CHEBI:15378"/>
        <dbReference type="ChEBI" id="CHEBI:16827"/>
        <dbReference type="ChEBI" id="CHEBI:57540"/>
        <dbReference type="ChEBI" id="CHEBI:57945"/>
        <dbReference type="ChEBI" id="CHEBI:78600"/>
    </reaction>
    <physiologicalReaction direction="left-to-right" evidence="12 13 14">
        <dbReference type="Rhea" id="RHEA:42205"/>
    </physiologicalReaction>
</comment>
<comment type="catalytic activity">
    <reaction evidence="5">
        <text>11beta,17beta-dihydroxyandrost-4-ene-3-one + NAD(+) = 17beta-hydroxyandrost-4-ene-3,11-dione + NADH + H(+)</text>
        <dbReference type="Rhea" id="RHEA:69368"/>
        <dbReference type="ChEBI" id="CHEBI:15378"/>
        <dbReference type="ChEBI" id="CHEBI:34133"/>
        <dbReference type="ChEBI" id="CHEBI:57540"/>
        <dbReference type="ChEBI" id="CHEBI:57945"/>
        <dbReference type="ChEBI" id="CHEBI:81481"/>
    </reaction>
    <physiologicalReaction direction="left-to-right" evidence="12">
        <dbReference type="Rhea" id="RHEA:69369"/>
    </physiologicalReaction>
</comment>
<comment type="catalytic activity">
    <reaction evidence="2">
        <text>11beta-hydroxyandrost-4-ene-3,17-dione + NAD(+) = androst-4-ene-3,11,17-trione + NADH + H(+)</text>
        <dbReference type="Rhea" id="RHEA:69408"/>
        <dbReference type="ChEBI" id="CHEBI:2495"/>
        <dbReference type="ChEBI" id="CHEBI:15378"/>
        <dbReference type="ChEBI" id="CHEBI:27967"/>
        <dbReference type="ChEBI" id="CHEBI:57540"/>
        <dbReference type="ChEBI" id="CHEBI:57945"/>
    </reaction>
    <physiologicalReaction direction="left-to-right" evidence="2">
        <dbReference type="Rhea" id="RHEA:69409"/>
    </physiologicalReaction>
</comment>
<comment type="activity regulation">
    <text evidence="2 7">Inhibited by glycyrrhetinic acid (By similarity). Induced by progesterone, through the Ihh signaling pathway (PubMed:31600723).</text>
</comment>
<comment type="biophysicochemical properties">
    <kinetics>
        <KM evidence="5">24 nM for corticosterone</KM>
        <KM evidence="5">33 nM for 11beta,17beta-dihydroxyandrost-4-ene-3-one</KM>
        <KM evidence="5">44 nM for cortisol</KM>
    </kinetics>
</comment>
<comment type="pathway">
    <text evidence="11">Steroid metabolism.</text>
</comment>
<comment type="subunit">
    <text evidence="2">Interacts with ligand-free cytoplasmic NR3C2.</text>
</comment>
<comment type="subcellular location">
    <subcellularLocation>
        <location evidence="2">Microsome</location>
    </subcellularLocation>
    <subcellularLocation>
        <location evidence="2">Endoplasmic reticulum</location>
    </subcellularLocation>
</comment>
<comment type="tissue specificity">
    <text evidence="7 8">Highly expressed in kidney (PubMed:7664690). Also found in colon and small intestine (PubMed:7664690). Not expressed in the adrenal gland (PubMed:7664690). Expressed in uterus (PubMed:31600723).</text>
</comment>
<comment type="developmental stage">
    <text evidence="7">Expression (mRNA and protein) is highest in uteri on days 3 and 4 during early pregnancy.</text>
</comment>
<comment type="similarity">
    <text evidence="11">Belongs to the short-chain dehydrogenases/reductases (SDR) family.</text>
</comment>
<comment type="caution">
    <text evidence="4">Rats and mice do not produce appreciable cortisol, because they do not express the 17-alpha hydroxylase (Cyp17a1) enzyme in the adrenals.</text>
</comment>
<comment type="sequence caution" evidence="11">
    <conflict type="frameshift">
        <sequence resource="EMBL-CDS" id="CAA62219"/>
    </conflict>
</comment>
<proteinExistence type="evidence at protein level"/>
<accession>P51661</accession>
<accession>Q91WK3</accession>
<reference key="1">
    <citation type="journal article" date="1995" name="Endocrinology">
        <title>Cloning of the mouse 11 beta-hydroxysteroid dehydrogenase type 2 gene: tissue specific expression and localization in distal convoluted tubules and collecting ducts of the kidney.</title>
        <authorList>
            <person name="Cole T.J."/>
        </authorList>
    </citation>
    <scope>NUCLEOTIDE SEQUENCE [GENOMIC DNA]</scope>
    <scope>TISSUE SPECIFICITY</scope>
    <scope>FUNCTION</scope>
    <source>
        <strain>129/Sv</strain>
    </source>
</reference>
<reference key="2">
    <citation type="journal article" date="2004" name="Genome Res.">
        <title>The status, quality, and expansion of the NIH full-length cDNA project: the Mammalian Gene Collection (MGC).</title>
        <authorList>
            <consortium name="The MGC Project Team"/>
        </authorList>
    </citation>
    <scope>NUCLEOTIDE SEQUENCE [LARGE SCALE MRNA]</scope>
    <source>
        <tissue>Kidney</tissue>
    </source>
</reference>
<reference key="3">
    <citation type="journal article" date="1992" name="Life Sci.">
        <title>Adrenal glands of mouse and rat do not synthesize androgens.</title>
        <authorList>
            <person name="van Weerden W.M."/>
            <person name="Bierings H.G."/>
            <person name="van Steenbrugge G.J."/>
            <person name="de Jong F.H."/>
            <person name="Schroeder F.H."/>
        </authorList>
    </citation>
    <scope>CAUTION</scope>
</reference>
<reference key="4">
    <citation type="journal article" date="2012" name="Toxicology">
        <title>Species-specific differences in the inhibition of human and zebrafish 11beta-hydroxysteroid dehydrogenase 2 by thiram and organotins.</title>
        <authorList>
            <person name="Meyer A."/>
            <person name="Strajhar P."/>
            <person name="Murer C."/>
            <person name="Da Cunha T."/>
            <person name="Odermatt A."/>
        </authorList>
    </citation>
    <scope>FUNCTION</scope>
    <scope>CATALYTIC ACTIVITY</scope>
    <scope>BIOPHYSICOCHEMICAL PROPERTIES</scope>
</reference>
<reference key="5">
    <citation type="journal article" date="2019" name="J. Steroid Biochem. Mol. Biol.">
        <title>Enzymatic interconversion of the oxysterols 7beta,25-dihydroxycholesterol and 7-keto,25-hydroxycholesterol by 11beta-hydroxysteroid dehydrogenase type 1 and 2.</title>
        <authorList>
            <person name="Beck K.R."/>
            <person name="Kanagaratnam S."/>
            <person name="Kratschmar D.V."/>
            <person name="Birk J."/>
            <person name="Yamaguchi H."/>
            <person name="Sailer A.W."/>
            <person name="Seuwen K."/>
            <person name="Odermatt A."/>
        </authorList>
    </citation>
    <scope>FUNCTION</scope>
    <scope>CATALYTIC ACTIVITY</scope>
</reference>
<reference key="6">
    <citation type="journal article" date="2020" name="J. Endocrinol.">
        <title>Progesterone-regulated Hsd11b2 as a barrier to balance mouse uterine corticosterone.</title>
        <authorList>
            <person name="Zheng H.T."/>
            <person name="Fu T."/>
            <person name="Zhang H.Y."/>
            <person name="Yang Z.S."/>
            <person name="Zheng Z.H."/>
            <person name="Yang Z.M."/>
        </authorList>
    </citation>
    <scope>FUNCTION</scope>
    <scope>CATALYTIC ACTIVITY</scope>
    <scope>DEVELOPMENTAL STAGE</scope>
    <scope>TISSUE SPECIFICITY</scope>
</reference>
<reference key="7">
    <citation type="journal article" date="2010" name="Cell">
        <title>A tissue-specific atlas of mouse protein phosphorylation and expression.</title>
        <authorList>
            <person name="Huttlin E.L."/>
            <person name="Jedrychowski M.P."/>
            <person name="Elias J.E."/>
            <person name="Goswami T."/>
            <person name="Rad R."/>
            <person name="Beausoleil S.A."/>
            <person name="Villen J."/>
            <person name="Haas W."/>
            <person name="Sowa M.E."/>
            <person name="Gygi S.P."/>
        </authorList>
    </citation>
    <scope>IDENTIFICATION BY MASS SPECTROMETRY [LARGE SCALE ANALYSIS]</scope>
    <source>
        <tissue>Kidney</tissue>
    </source>
</reference>
<organism>
    <name type="scientific">Mus musculus</name>
    <name type="common">Mouse</name>
    <dbReference type="NCBI Taxonomy" id="10090"/>
    <lineage>
        <taxon>Eukaryota</taxon>
        <taxon>Metazoa</taxon>
        <taxon>Chordata</taxon>
        <taxon>Craniata</taxon>
        <taxon>Vertebrata</taxon>
        <taxon>Euteleostomi</taxon>
        <taxon>Mammalia</taxon>
        <taxon>Eutheria</taxon>
        <taxon>Euarchontoglires</taxon>
        <taxon>Glires</taxon>
        <taxon>Rodentia</taxon>
        <taxon>Myomorpha</taxon>
        <taxon>Muroidea</taxon>
        <taxon>Muridae</taxon>
        <taxon>Murinae</taxon>
        <taxon>Mus</taxon>
        <taxon>Mus</taxon>
    </lineage>
</organism>
<dbReference type="EC" id="1.1.1.-" evidence="6 14"/>
<dbReference type="EMBL" id="S79554">
    <property type="protein sequence ID" value="AAC60711.1"/>
    <property type="status" value="ALT_FRAME"/>
    <property type="molecule type" value="Genomic_DNA"/>
</dbReference>
<dbReference type="EMBL" id="S79550">
    <property type="protein sequence ID" value="AAC60711.1"/>
    <property type="status" value="JOINED"/>
    <property type="molecule type" value="Genomic_DNA"/>
</dbReference>
<dbReference type="EMBL" id="S79551">
    <property type="protein sequence ID" value="AAC60711.1"/>
    <property type="status" value="JOINED"/>
    <property type="molecule type" value="Genomic_DNA"/>
</dbReference>
<dbReference type="EMBL" id="S79552">
    <property type="protein sequence ID" value="AAC60711.1"/>
    <property type="status" value="JOINED"/>
    <property type="molecule type" value="Genomic_DNA"/>
</dbReference>
<dbReference type="EMBL" id="S79553">
    <property type="protein sequence ID" value="AAC60711.1"/>
    <property type="status" value="JOINED"/>
    <property type="molecule type" value="Genomic_DNA"/>
</dbReference>
<dbReference type="EMBL" id="X90646">
    <property type="protein sequence ID" value="CAA62218.1"/>
    <property type="molecule type" value="Genomic_DNA"/>
</dbReference>
<dbReference type="EMBL" id="X90647">
    <property type="protein sequence ID" value="CAA62219.1"/>
    <property type="status" value="ALT_FRAME"/>
    <property type="molecule type" value="Genomic_DNA"/>
</dbReference>
<dbReference type="EMBL" id="BC014753">
    <property type="protein sequence ID" value="AAH14753.1"/>
    <property type="molecule type" value="mRNA"/>
</dbReference>
<dbReference type="CCDS" id="CCDS40460.1"/>
<dbReference type="PIR" id="S60188">
    <property type="entry name" value="S60188"/>
</dbReference>
<dbReference type="RefSeq" id="NP_032315.2">
    <property type="nucleotide sequence ID" value="NM_008289.2"/>
</dbReference>
<dbReference type="SMR" id="P51661"/>
<dbReference type="BioGRID" id="200431">
    <property type="interactions" value="1"/>
</dbReference>
<dbReference type="FunCoup" id="P51661">
    <property type="interactions" value="457"/>
</dbReference>
<dbReference type="STRING" id="10090.ENSMUSP00000034363"/>
<dbReference type="BindingDB" id="P51661"/>
<dbReference type="ChEMBL" id="CHEMBL3490"/>
<dbReference type="DrugCentral" id="P51661"/>
<dbReference type="iPTMnet" id="P51661"/>
<dbReference type="PhosphoSitePlus" id="P51661"/>
<dbReference type="jPOST" id="P51661"/>
<dbReference type="PaxDb" id="10090-ENSMUSP00000034363"/>
<dbReference type="PeptideAtlas" id="P51661"/>
<dbReference type="ProteomicsDB" id="277335"/>
<dbReference type="Antibodypedia" id="29548">
    <property type="antibodies" value="309 antibodies from 32 providers"/>
</dbReference>
<dbReference type="DNASU" id="15484"/>
<dbReference type="Ensembl" id="ENSMUST00000034363.7">
    <property type="protein sequence ID" value="ENSMUSP00000034363.6"/>
    <property type="gene ID" value="ENSMUSG00000031891.7"/>
</dbReference>
<dbReference type="GeneID" id="15484"/>
<dbReference type="KEGG" id="mmu:15484"/>
<dbReference type="UCSC" id="uc009nde.1">
    <property type="organism name" value="mouse"/>
</dbReference>
<dbReference type="AGR" id="MGI:104720"/>
<dbReference type="CTD" id="3291"/>
<dbReference type="MGI" id="MGI:104720">
    <property type="gene designation" value="Hsd11b2"/>
</dbReference>
<dbReference type="VEuPathDB" id="HostDB:ENSMUSG00000031891"/>
<dbReference type="eggNOG" id="KOG1610">
    <property type="taxonomic scope" value="Eukaryota"/>
</dbReference>
<dbReference type="GeneTree" id="ENSGT00940000159716"/>
<dbReference type="HOGENOM" id="CLU_010194_2_0_1"/>
<dbReference type="InParanoid" id="P51661"/>
<dbReference type="OMA" id="GMGLMYF"/>
<dbReference type="OrthoDB" id="9876299at2759"/>
<dbReference type="PhylomeDB" id="P51661"/>
<dbReference type="TreeFam" id="TF325617"/>
<dbReference type="BRENDA" id="1.1.1.146">
    <property type="organism ID" value="3474"/>
</dbReference>
<dbReference type="BRENDA" id="1.1.1.B40">
    <property type="organism ID" value="3474"/>
</dbReference>
<dbReference type="Reactome" id="R-MMU-194002">
    <property type="pathway name" value="Glucocorticoid biosynthesis"/>
</dbReference>
<dbReference type="Reactome" id="R-MMU-9757110">
    <property type="pathway name" value="Prednisone ADME"/>
</dbReference>
<dbReference type="BioGRID-ORCS" id="15484">
    <property type="hits" value="0 hits in 79 CRISPR screens"/>
</dbReference>
<dbReference type="PRO" id="PR:P51661"/>
<dbReference type="Proteomes" id="UP000000589">
    <property type="component" value="Chromosome 8"/>
</dbReference>
<dbReference type="RNAct" id="P51661">
    <property type="molecule type" value="protein"/>
</dbReference>
<dbReference type="Bgee" id="ENSMUSG00000031891">
    <property type="expression patterns" value="Expressed in left colon and 126 other cell types or tissues"/>
</dbReference>
<dbReference type="GO" id="GO:0005783">
    <property type="term" value="C:endoplasmic reticulum"/>
    <property type="evidence" value="ECO:0007669"/>
    <property type="project" value="UniProtKB-SubCell"/>
</dbReference>
<dbReference type="GO" id="GO:0070523">
    <property type="term" value="F:11-beta-hydroxysteroid dehydrogenase (NAD+) activity"/>
    <property type="evidence" value="ECO:0007669"/>
    <property type="project" value="Ensembl"/>
</dbReference>
<dbReference type="GO" id="GO:0051287">
    <property type="term" value="F:NAD binding"/>
    <property type="evidence" value="ECO:0007669"/>
    <property type="project" value="Ensembl"/>
</dbReference>
<dbReference type="GO" id="GO:0005496">
    <property type="term" value="F:steroid binding"/>
    <property type="evidence" value="ECO:0007669"/>
    <property type="project" value="Ensembl"/>
</dbReference>
<dbReference type="GO" id="GO:0034650">
    <property type="term" value="P:cortisol metabolic process"/>
    <property type="evidence" value="ECO:0007669"/>
    <property type="project" value="Ensembl"/>
</dbReference>
<dbReference type="GO" id="GO:0007565">
    <property type="term" value="P:female pregnancy"/>
    <property type="evidence" value="ECO:0000315"/>
    <property type="project" value="MGI"/>
</dbReference>
<dbReference type="GO" id="GO:0002017">
    <property type="term" value="P:regulation of blood volume by renal aldosterone"/>
    <property type="evidence" value="ECO:0007669"/>
    <property type="project" value="Ensembl"/>
</dbReference>
<dbReference type="GO" id="GO:0032094">
    <property type="term" value="P:response to food"/>
    <property type="evidence" value="ECO:0007669"/>
    <property type="project" value="Ensembl"/>
</dbReference>
<dbReference type="GO" id="GO:0051384">
    <property type="term" value="P:response to glucocorticoid"/>
    <property type="evidence" value="ECO:0007669"/>
    <property type="project" value="Ensembl"/>
</dbReference>
<dbReference type="GO" id="GO:0001666">
    <property type="term" value="P:response to hypoxia"/>
    <property type="evidence" value="ECO:0007669"/>
    <property type="project" value="Ensembl"/>
</dbReference>
<dbReference type="GO" id="GO:0032868">
    <property type="term" value="P:response to insulin"/>
    <property type="evidence" value="ECO:0007669"/>
    <property type="project" value="Ensembl"/>
</dbReference>
<dbReference type="GO" id="GO:0009410">
    <property type="term" value="P:response to xenobiotic stimulus"/>
    <property type="evidence" value="ECO:0007669"/>
    <property type="project" value="Ensembl"/>
</dbReference>
<dbReference type="CDD" id="cd09805">
    <property type="entry name" value="type2_17beta_HSD-like_SDR_c"/>
    <property type="match status" value="1"/>
</dbReference>
<dbReference type="FunFam" id="3.40.50.720:FF:000074">
    <property type="entry name" value="Retinol dehydrogenase type 1"/>
    <property type="match status" value="1"/>
</dbReference>
<dbReference type="Gene3D" id="3.40.50.720">
    <property type="entry name" value="NAD(P)-binding Rossmann-like Domain"/>
    <property type="match status" value="1"/>
</dbReference>
<dbReference type="InterPro" id="IPR036291">
    <property type="entry name" value="NAD(P)-bd_dom_sf"/>
</dbReference>
<dbReference type="InterPro" id="IPR020904">
    <property type="entry name" value="Sc_DH/Rdtase_CS"/>
</dbReference>
<dbReference type="InterPro" id="IPR002347">
    <property type="entry name" value="SDR_fam"/>
</dbReference>
<dbReference type="PANTHER" id="PTHR43313:SF2">
    <property type="entry name" value="11-BETA-HYDROXYSTEROID DEHYDROGENASE TYPE 2"/>
    <property type="match status" value="1"/>
</dbReference>
<dbReference type="PANTHER" id="PTHR43313">
    <property type="entry name" value="SHORT-CHAIN DEHYDROGENASE/REDUCTASE FAMILY 9C"/>
    <property type="match status" value="1"/>
</dbReference>
<dbReference type="Pfam" id="PF00106">
    <property type="entry name" value="adh_short"/>
    <property type="match status" value="1"/>
</dbReference>
<dbReference type="PRINTS" id="PR00081">
    <property type="entry name" value="GDHRDH"/>
</dbReference>
<dbReference type="SUPFAM" id="SSF51735">
    <property type="entry name" value="NAD(P)-binding Rossmann-fold domains"/>
    <property type="match status" value="1"/>
</dbReference>
<dbReference type="PROSITE" id="PS00061">
    <property type="entry name" value="ADH_SHORT"/>
    <property type="match status" value="1"/>
</dbReference>
<gene>
    <name type="primary">Hsd11b2</name>
    <name type="synonym">Hsd11k</name>
</gene>